<reference key="1">
    <citation type="journal article" date="1996" name="Science">
        <title>Complete genome sequence of the methanogenic archaeon, Methanococcus jannaschii.</title>
        <authorList>
            <person name="Bult C.J."/>
            <person name="White O."/>
            <person name="Olsen G.J."/>
            <person name="Zhou L."/>
            <person name="Fleischmann R.D."/>
            <person name="Sutton G.G."/>
            <person name="Blake J.A."/>
            <person name="FitzGerald L.M."/>
            <person name="Clayton R.A."/>
            <person name="Gocayne J.D."/>
            <person name="Kerlavage A.R."/>
            <person name="Dougherty B.A."/>
            <person name="Tomb J.-F."/>
            <person name="Adams M.D."/>
            <person name="Reich C.I."/>
            <person name="Overbeek R."/>
            <person name="Kirkness E.F."/>
            <person name="Weinstock K.G."/>
            <person name="Merrick J.M."/>
            <person name="Glodek A."/>
            <person name="Scott J.L."/>
            <person name="Geoghagen N.S.M."/>
            <person name="Weidman J.F."/>
            <person name="Fuhrmann J.L."/>
            <person name="Nguyen D."/>
            <person name="Utterback T.R."/>
            <person name="Kelley J.M."/>
            <person name="Peterson J.D."/>
            <person name="Sadow P.W."/>
            <person name="Hanna M.C."/>
            <person name="Cotton M.D."/>
            <person name="Roberts K.M."/>
            <person name="Hurst M.A."/>
            <person name="Kaine B.P."/>
            <person name="Borodovsky M."/>
            <person name="Klenk H.-P."/>
            <person name="Fraser C.M."/>
            <person name="Smith H.O."/>
            <person name="Woese C.R."/>
            <person name="Venter J.C."/>
        </authorList>
    </citation>
    <scope>NUCLEOTIDE SEQUENCE [LARGE SCALE GENOMIC DNA]</scope>
    <source>
        <strain>ATCC 43067 / DSM 2661 / JAL-1 / JCM 10045 / NBRC 100440</strain>
    </source>
</reference>
<protein>
    <recommendedName>
        <fullName evidence="1">Large ribosomal subunit protein eL42</fullName>
    </recommendedName>
    <alternativeName>
        <fullName evidence="2">50S ribosomal protein L44e</fullName>
    </alternativeName>
</protein>
<gene>
    <name evidence="1" type="primary">rpl44e</name>
    <name type="ordered locus">MJ0249</name>
</gene>
<feature type="chain" id="PRO_0000149151" description="Large ribosomal subunit protein eL42">
    <location>
        <begin position="1"/>
        <end position="94"/>
    </location>
</feature>
<feature type="zinc finger region" description="C4-type" evidence="1">
    <location>
        <begin position="11"/>
        <end position="73"/>
    </location>
</feature>
<feature type="binding site" evidence="1">
    <location>
        <position position="11"/>
    </location>
    <ligand>
        <name>Zn(2+)</name>
        <dbReference type="ChEBI" id="CHEBI:29105"/>
    </ligand>
</feature>
<feature type="binding site" evidence="1">
    <location>
        <position position="14"/>
    </location>
    <ligand>
        <name>Zn(2+)</name>
        <dbReference type="ChEBI" id="CHEBI:29105"/>
    </ligand>
</feature>
<feature type="binding site" evidence="1">
    <location>
        <position position="70"/>
    </location>
    <ligand>
        <name>Zn(2+)</name>
        <dbReference type="ChEBI" id="CHEBI:29105"/>
    </ligand>
</feature>
<feature type="binding site" evidence="1">
    <location>
        <position position="73"/>
    </location>
    <ligand>
        <name>Zn(2+)</name>
        <dbReference type="ChEBI" id="CHEBI:29105"/>
    </ligand>
</feature>
<name>RL44E_METJA</name>
<sequence>MKIPKKVRRYCPYCKKHTIHIVEKAKKGKPSELTWGQRQFRRVTAGYGGFPRPLPDRSKPVKKIDLRFKCTECGKMHTKANGCFRSGRFEFVEK</sequence>
<accession>P54027</accession>
<evidence type="ECO:0000255" key="1">
    <source>
        <dbReference type="HAMAP-Rule" id="MF_01476"/>
    </source>
</evidence>
<evidence type="ECO:0000305" key="2"/>
<organism>
    <name type="scientific">Methanocaldococcus jannaschii (strain ATCC 43067 / DSM 2661 / JAL-1 / JCM 10045 / NBRC 100440)</name>
    <name type="common">Methanococcus jannaschii</name>
    <dbReference type="NCBI Taxonomy" id="243232"/>
    <lineage>
        <taxon>Archaea</taxon>
        <taxon>Methanobacteriati</taxon>
        <taxon>Methanobacteriota</taxon>
        <taxon>Methanomada group</taxon>
        <taxon>Methanococci</taxon>
        <taxon>Methanococcales</taxon>
        <taxon>Methanocaldococcaceae</taxon>
        <taxon>Methanocaldococcus</taxon>
    </lineage>
</organism>
<comment type="function">
    <text evidence="1">Binds to the 23S rRNA.</text>
</comment>
<comment type="cofactor">
    <cofactor evidence="1">
        <name>Zn(2+)</name>
        <dbReference type="ChEBI" id="CHEBI:29105"/>
    </cofactor>
    <text evidence="1">Binds 1 zinc ion per subunit.</text>
</comment>
<comment type="subunit">
    <text evidence="1">Part of the 50S ribosomal subunit.</text>
</comment>
<comment type="similarity">
    <text evidence="1">Belongs to the eukaryotic ribosomal protein eL42 family.</text>
</comment>
<keyword id="KW-0479">Metal-binding</keyword>
<keyword id="KW-1185">Reference proteome</keyword>
<keyword id="KW-0687">Ribonucleoprotein</keyword>
<keyword id="KW-0689">Ribosomal protein</keyword>
<keyword id="KW-0694">RNA-binding</keyword>
<keyword id="KW-0699">rRNA-binding</keyword>
<keyword id="KW-0862">Zinc</keyword>
<keyword id="KW-0863">Zinc-finger</keyword>
<dbReference type="EMBL" id="L77117">
    <property type="protein sequence ID" value="AAB98236.1"/>
    <property type="molecule type" value="Genomic_DNA"/>
</dbReference>
<dbReference type="PIR" id="B64331">
    <property type="entry name" value="B64331"/>
</dbReference>
<dbReference type="RefSeq" id="WP_010869747.1">
    <property type="nucleotide sequence ID" value="NC_000909.1"/>
</dbReference>
<dbReference type="SMR" id="P54027"/>
<dbReference type="FunCoup" id="P54027">
    <property type="interactions" value="154"/>
</dbReference>
<dbReference type="STRING" id="243232.MJ_0249"/>
<dbReference type="PaxDb" id="243232-MJ_0249"/>
<dbReference type="EnsemblBacteria" id="AAB98236">
    <property type="protein sequence ID" value="AAB98236"/>
    <property type="gene ID" value="MJ_0249"/>
</dbReference>
<dbReference type="GeneID" id="1451103"/>
<dbReference type="KEGG" id="mja:MJ_0249"/>
<dbReference type="eggNOG" id="arCOG04109">
    <property type="taxonomic scope" value="Archaea"/>
</dbReference>
<dbReference type="HOGENOM" id="CLU_114645_3_0_2"/>
<dbReference type="InParanoid" id="P54027"/>
<dbReference type="OrthoDB" id="52456at2157"/>
<dbReference type="PhylomeDB" id="P54027"/>
<dbReference type="Proteomes" id="UP000000805">
    <property type="component" value="Chromosome"/>
</dbReference>
<dbReference type="GO" id="GO:0022625">
    <property type="term" value="C:cytosolic large ribosomal subunit"/>
    <property type="evidence" value="ECO:0000318"/>
    <property type="project" value="GO_Central"/>
</dbReference>
<dbReference type="GO" id="GO:0070180">
    <property type="term" value="F:large ribosomal subunit rRNA binding"/>
    <property type="evidence" value="ECO:0007669"/>
    <property type="project" value="UniProtKB-UniRule"/>
</dbReference>
<dbReference type="GO" id="GO:0003735">
    <property type="term" value="F:structural constituent of ribosome"/>
    <property type="evidence" value="ECO:0007669"/>
    <property type="project" value="InterPro"/>
</dbReference>
<dbReference type="GO" id="GO:0008270">
    <property type="term" value="F:zinc ion binding"/>
    <property type="evidence" value="ECO:0007669"/>
    <property type="project" value="UniProtKB-UniRule"/>
</dbReference>
<dbReference type="GO" id="GO:0006412">
    <property type="term" value="P:translation"/>
    <property type="evidence" value="ECO:0007669"/>
    <property type="project" value="UniProtKB-UniRule"/>
</dbReference>
<dbReference type="FunFam" id="3.10.450.80:FF:000001">
    <property type="entry name" value="60S ribosomal protein L44"/>
    <property type="match status" value="1"/>
</dbReference>
<dbReference type="Gene3D" id="3.10.450.80">
    <property type="match status" value="1"/>
</dbReference>
<dbReference type="HAMAP" id="MF_01476">
    <property type="entry name" value="Ribosomal_L44e"/>
    <property type="match status" value="1"/>
</dbReference>
<dbReference type="InterPro" id="IPR000552">
    <property type="entry name" value="Ribosomal_eL44"/>
</dbReference>
<dbReference type="InterPro" id="IPR053708">
    <property type="entry name" value="Ribosomal_LSU_eL42"/>
</dbReference>
<dbReference type="InterPro" id="IPR011332">
    <property type="entry name" value="Ribosomal_zn-bd"/>
</dbReference>
<dbReference type="NCBIfam" id="NF004425">
    <property type="entry name" value="PRK05767.1"/>
    <property type="match status" value="1"/>
</dbReference>
<dbReference type="PANTHER" id="PTHR10369">
    <property type="entry name" value="60S RIBOSOMAL PROTEIN L36A/L44"/>
    <property type="match status" value="1"/>
</dbReference>
<dbReference type="Pfam" id="PF00935">
    <property type="entry name" value="Ribosomal_L44"/>
    <property type="match status" value="1"/>
</dbReference>
<dbReference type="SUPFAM" id="SSF57829">
    <property type="entry name" value="Zn-binding ribosomal proteins"/>
    <property type="match status" value="1"/>
</dbReference>
<dbReference type="PROSITE" id="PS01172">
    <property type="entry name" value="RIBOSOMAL_L44E"/>
    <property type="match status" value="1"/>
</dbReference>
<proteinExistence type="inferred from homology"/>